<evidence type="ECO:0000250" key="1"/>
<evidence type="ECO:0000305" key="2"/>
<feature type="chain" id="PRO_0000131823" description="Adenylate kinase">
    <location>
        <begin position="1"/>
        <end position="196"/>
    </location>
</feature>
<feature type="binding site" evidence="1">
    <location>
        <begin position="9"/>
        <end position="17"/>
    </location>
    <ligand>
        <name>ATP</name>
        <dbReference type="ChEBI" id="CHEBI:30616"/>
    </ligand>
</feature>
<proteinExistence type="inferred from homology"/>
<organism>
    <name type="scientific">Pyrococcus horikoshii (strain ATCC 700860 / DSM 12428 / JCM 9974 / NBRC 100139 / OT-3)</name>
    <dbReference type="NCBI Taxonomy" id="70601"/>
    <lineage>
        <taxon>Archaea</taxon>
        <taxon>Methanobacteriati</taxon>
        <taxon>Methanobacteriota</taxon>
        <taxon>Thermococci</taxon>
        <taxon>Thermococcales</taxon>
        <taxon>Thermococcaceae</taxon>
        <taxon>Pyrococcus</taxon>
    </lineage>
</organism>
<comment type="catalytic activity">
    <reaction>
        <text>AMP + ATP = 2 ADP</text>
        <dbReference type="Rhea" id="RHEA:12973"/>
        <dbReference type="ChEBI" id="CHEBI:30616"/>
        <dbReference type="ChEBI" id="CHEBI:456215"/>
        <dbReference type="ChEBI" id="CHEBI:456216"/>
        <dbReference type="EC" id="2.7.4.3"/>
    </reaction>
</comment>
<comment type="subcellular location">
    <subcellularLocation>
        <location evidence="1">Cytoplasm</location>
    </subcellularLocation>
</comment>
<comment type="similarity">
    <text evidence="2">Belongs to the archaeal adenylate kinase family.</text>
</comment>
<name>KADA_PYRHO</name>
<keyword id="KW-0067">ATP-binding</keyword>
<keyword id="KW-0963">Cytoplasm</keyword>
<keyword id="KW-0418">Kinase</keyword>
<keyword id="KW-0547">Nucleotide-binding</keyword>
<keyword id="KW-0808">Transferase</keyword>
<reference key="1">
    <citation type="journal article" date="1998" name="DNA Res.">
        <title>Complete sequence and gene organization of the genome of a hyper-thermophilic archaebacterium, Pyrococcus horikoshii OT3.</title>
        <authorList>
            <person name="Kawarabayasi Y."/>
            <person name="Sawada M."/>
            <person name="Horikawa H."/>
            <person name="Haikawa Y."/>
            <person name="Hino Y."/>
            <person name="Yamamoto S."/>
            <person name="Sekine M."/>
            <person name="Baba S."/>
            <person name="Kosugi H."/>
            <person name="Hosoyama A."/>
            <person name="Nagai Y."/>
            <person name="Sakai M."/>
            <person name="Ogura K."/>
            <person name="Otsuka R."/>
            <person name="Nakazawa H."/>
            <person name="Takamiya M."/>
            <person name="Ohfuku Y."/>
            <person name="Funahashi T."/>
            <person name="Tanaka T."/>
            <person name="Kudoh Y."/>
            <person name="Yamazaki J."/>
            <person name="Kushida N."/>
            <person name="Oguchi A."/>
            <person name="Aoki K."/>
            <person name="Yoshizawa T."/>
            <person name="Nakamura Y."/>
            <person name="Robb F.T."/>
            <person name="Horikoshi K."/>
            <person name="Masuchi Y."/>
            <person name="Shizuya H."/>
            <person name="Kikuchi H."/>
        </authorList>
    </citation>
    <scope>NUCLEOTIDE SEQUENCE [LARGE SCALE GENOMIC DNA]</scope>
    <source>
        <strain>ATCC 700860 / DSM 12428 / JCM 9974 / NBRC 100139 / OT-3</strain>
    </source>
</reference>
<gene>
    <name type="primary">adkA</name>
    <name type="ordered locus">PH1753</name>
</gene>
<accession>O59443</accession>
<dbReference type="EC" id="2.7.4.3"/>
<dbReference type="EMBL" id="BA000001">
    <property type="protein sequence ID" value="BAA30867.1"/>
    <property type="molecule type" value="Genomic_DNA"/>
</dbReference>
<dbReference type="PIR" id="D71184">
    <property type="entry name" value="D71184"/>
</dbReference>
<dbReference type="RefSeq" id="WP_010885817.1">
    <property type="nucleotide sequence ID" value="NC_000961.1"/>
</dbReference>
<dbReference type="SMR" id="O59443"/>
<dbReference type="STRING" id="70601.gene:9378750"/>
<dbReference type="EnsemblBacteria" id="BAA30867">
    <property type="protein sequence ID" value="BAA30867"/>
    <property type="gene ID" value="BAA30867"/>
</dbReference>
<dbReference type="GeneID" id="1442598"/>
<dbReference type="KEGG" id="pho:PH1753"/>
<dbReference type="eggNOG" id="arCOG01039">
    <property type="taxonomic scope" value="Archaea"/>
</dbReference>
<dbReference type="OrthoDB" id="26198at2157"/>
<dbReference type="Proteomes" id="UP000000752">
    <property type="component" value="Chromosome"/>
</dbReference>
<dbReference type="GO" id="GO:0005737">
    <property type="term" value="C:cytoplasm"/>
    <property type="evidence" value="ECO:0007669"/>
    <property type="project" value="UniProtKB-SubCell"/>
</dbReference>
<dbReference type="GO" id="GO:0004017">
    <property type="term" value="F:adenylate kinase activity"/>
    <property type="evidence" value="ECO:0007669"/>
    <property type="project" value="UniProtKB-UniRule"/>
</dbReference>
<dbReference type="GO" id="GO:0005524">
    <property type="term" value="F:ATP binding"/>
    <property type="evidence" value="ECO:0007669"/>
    <property type="project" value="UniProtKB-UniRule"/>
</dbReference>
<dbReference type="Gene3D" id="3.40.50.300">
    <property type="entry name" value="P-loop containing nucleotide triphosphate hydrolases"/>
    <property type="match status" value="1"/>
</dbReference>
<dbReference type="HAMAP" id="MF_00234">
    <property type="entry name" value="Adenylate_kinase_AdkA"/>
    <property type="match status" value="1"/>
</dbReference>
<dbReference type="InterPro" id="IPR023477">
    <property type="entry name" value="Adenylate_kinase_AdkA"/>
</dbReference>
<dbReference type="InterPro" id="IPR027417">
    <property type="entry name" value="P-loop_NTPase"/>
</dbReference>
<dbReference type="NCBIfam" id="NF003122">
    <property type="entry name" value="PRK04040.1"/>
    <property type="match status" value="1"/>
</dbReference>
<dbReference type="Pfam" id="PF13207">
    <property type="entry name" value="AAA_17"/>
    <property type="match status" value="1"/>
</dbReference>
<dbReference type="SUPFAM" id="SSF52540">
    <property type="entry name" value="P-loop containing nucleoside triphosphate hydrolases"/>
    <property type="match status" value="1"/>
</dbReference>
<sequence>MPFVVIITGIPGVGKSTITKLALQRTRAKFKLINFGDLMFEEALKLKLVKHRDEMRKLPLEVQRELQMNAAKKIAEMAKNYPILLDTHATIKTPHGYLLGLPYEVIKILNPNFIVIIEATPSEILGRRLRDLKRDRDVETEEQIQRHQDLNRAAAITYAMHSNALIKIIENHEDKGLEEAVNELVKILDLAVKEYA</sequence>
<protein>
    <recommendedName>
        <fullName>Adenylate kinase</fullName>
        <shortName>AK</shortName>
        <ecNumber>2.7.4.3</ecNumber>
    </recommendedName>
    <alternativeName>
        <fullName>ATP-AMP transphosphorylase</fullName>
    </alternativeName>
</protein>